<accession>Q874R3</accession>
<proteinExistence type="evidence at protein level"/>
<evidence type="ECO:0000255" key="1">
    <source>
        <dbReference type="PROSITE-ProRule" id="PRU00330"/>
    </source>
</evidence>
<evidence type="ECO:0000269" key="2">
    <source>
    </source>
</evidence>
<keyword id="KW-0131">Cell cycle</keyword>
<keyword id="KW-0132">Cell division</keyword>
<keyword id="KW-0498">Mitosis</keyword>
<keyword id="KW-1185">Reference proteome</keyword>
<keyword id="KW-0833">Ubl conjugation pathway</keyword>
<organism>
    <name type="scientific">Schizosaccharomyces pombe (strain 972 / ATCC 24843)</name>
    <name type="common">Fission yeast</name>
    <dbReference type="NCBI Taxonomy" id="284812"/>
    <lineage>
        <taxon>Eukaryota</taxon>
        <taxon>Fungi</taxon>
        <taxon>Dikarya</taxon>
        <taxon>Ascomycota</taxon>
        <taxon>Taphrinomycotina</taxon>
        <taxon>Schizosaccharomycetes</taxon>
        <taxon>Schizosaccharomycetales</taxon>
        <taxon>Schizosaccharomycetaceae</taxon>
        <taxon>Schizosaccharomyces</taxon>
    </lineage>
</organism>
<sequence>MNDTDLSTFTGRSLLIDQLSSVTQGTPVLDFIDKLRIHFYTTIRQNLLKIDLKNICSLHDLTDQLSDFWLVYEQSVLESPILSPELDRILTCFRCLCRRYLPISVIESVLTEYLDQVLKVWLESKTNPCLDMEKFFQLCEKFKQLGLSSVLKERFVYVLQLHVGSLLTTRYAMSWEQSVYHEALEWIRTEFGVLVEHVFSLSNPAVLVQLDHLVSQILAHLRSDNILDIVLHYPNSLGAIEDLRLVARQKQQRQYLTETFVKDCTSSILTASSDSSYILLFYVSTIRCFVALDPPGVLLDKAAKPIRSFLNEREDAYKCLVSLLFVDGEKGLRSELSQIPTENIDSTTDRFDNYHWMPDPIDAAPDFKKPTDRDVVGSLISIFKSKEPLVKELQLLLADRLLQLTDYHYEVEAKNIEFLKYRFGETVLQMCSVMLNDIENSRFIDQSIHMENYVSKGLHVTILSRLFWPTLSVRYFHLPGPLKKELDAYAEEYRERKRKRELVFLPNLGSVELEIELEDRTLTLTVTPEQAAFISLFEETSTLHIEKAAELLDQPKEIVERHLKFWLHHRVLTDIGDDRYRVRETEAETATETVLDEIQGVSAVQSEAESSAAEMRVYWSFVVGMLTNLGALELERIHNMLTMFIPPPNGYTRTQSELREFLALMIKEEKLEFTGGAYKLK</sequence>
<feature type="chain" id="PRO_0000237683" description="Anaphase-promoting complex subunit 2">
    <location>
        <begin position="1"/>
        <end position="681"/>
    </location>
</feature>
<reference key="1">
    <citation type="journal article" date="2002" name="Nature">
        <title>The genome sequence of Schizosaccharomyces pombe.</title>
        <authorList>
            <person name="Wood V."/>
            <person name="Gwilliam R."/>
            <person name="Rajandream M.A."/>
            <person name="Lyne M.H."/>
            <person name="Lyne R."/>
            <person name="Stewart A."/>
            <person name="Sgouros J.G."/>
            <person name="Peat N."/>
            <person name="Hayles J."/>
            <person name="Baker S.G."/>
            <person name="Basham D."/>
            <person name="Bowman S."/>
            <person name="Brooks K."/>
            <person name="Brown D."/>
            <person name="Brown S."/>
            <person name="Chillingworth T."/>
            <person name="Churcher C.M."/>
            <person name="Collins M."/>
            <person name="Connor R."/>
            <person name="Cronin A."/>
            <person name="Davis P."/>
            <person name="Feltwell T."/>
            <person name="Fraser A."/>
            <person name="Gentles S."/>
            <person name="Goble A."/>
            <person name="Hamlin N."/>
            <person name="Harris D.E."/>
            <person name="Hidalgo J."/>
            <person name="Hodgson G."/>
            <person name="Holroyd S."/>
            <person name="Hornsby T."/>
            <person name="Howarth S."/>
            <person name="Huckle E.J."/>
            <person name="Hunt S."/>
            <person name="Jagels K."/>
            <person name="James K.D."/>
            <person name="Jones L."/>
            <person name="Jones M."/>
            <person name="Leather S."/>
            <person name="McDonald S."/>
            <person name="McLean J."/>
            <person name="Mooney P."/>
            <person name="Moule S."/>
            <person name="Mungall K.L."/>
            <person name="Murphy L.D."/>
            <person name="Niblett D."/>
            <person name="Odell C."/>
            <person name="Oliver K."/>
            <person name="O'Neil S."/>
            <person name="Pearson D."/>
            <person name="Quail M.A."/>
            <person name="Rabbinowitsch E."/>
            <person name="Rutherford K.M."/>
            <person name="Rutter S."/>
            <person name="Saunders D."/>
            <person name="Seeger K."/>
            <person name="Sharp S."/>
            <person name="Skelton J."/>
            <person name="Simmonds M.N."/>
            <person name="Squares R."/>
            <person name="Squares S."/>
            <person name="Stevens K."/>
            <person name="Taylor K."/>
            <person name="Taylor R.G."/>
            <person name="Tivey A."/>
            <person name="Walsh S.V."/>
            <person name="Warren T."/>
            <person name="Whitehead S."/>
            <person name="Woodward J.R."/>
            <person name="Volckaert G."/>
            <person name="Aert R."/>
            <person name="Robben J."/>
            <person name="Grymonprez B."/>
            <person name="Weltjens I."/>
            <person name="Vanstreels E."/>
            <person name="Rieger M."/>
            <person name="Schaefer M."/>
            <person name="Mueller-Auer S."/>
            <person name="Gabel C."/>
            <person name="Fuchs M."/>
            <person name="Duesterhoeft A."/>
            <person name="Fritzc C."/>
            <person name="Holzer E."/>
            <person name="Moestl D."/>
            <person name="Hilbert H."/>
            <person name="Borzym K."/>
            <person name="Langer I."/>
            <person name="Beck A."/>
            <person name="Lehrach H."/>
            <person name="Reinhardt R."/>
            <person name="Pohl T.M."/>
            <person name="Eger P."/>
            <person name="Zimmermann W."/>
            <person name="Wedler H."/>
            <person name="Wambutt R."/>
            <person name="Purnelle B."/>
            <person name="Goffeau A."/>
            <person name="Cadieu E."/>
            <person name="Dreano S."/>
            <person name="Gloux S."/>
            <person name="Lelaure V."/>
            <person name="Mottier S."/>
            <person name="Galibert F."/>
            <person name="Aves S.J."/>
            <person name="Xiang Z."/>
            <person name="Hunt C."/>
            <person name="Moore K."/>
            <person name="Hurst S.M."/>
            <person name="Lucas M."/>
            <person name="Rochet M."/>
            <person name="Gaillardin C."/>
            <person name="Tallada V.A."/>
            <person name="Garzon A."/>
            <person name="Thode G."/>
            <person name="Daga R.R."/>
            <person name="Cruzado L."/>
            <person name="Jimenez J."/>
            <person name="Sanchez M."/>
            <person name="del Rey F."/>
            <person name="Benito J."/>
            <person name="Dominguez A."/>
            <person name="Revuelta J.L."/>
            <person name="Moreno S."/>
            <person name="Armstrong J."/>
            <person name="Forsburg S.L."/>
            <person name="Cerutti L."/>
            <person name="Lowe T."/>
            <person name="McCombie W.R."/>
            <person name="Paulsen I."/>
            <person name="Potashkin J."/>
            <person name="Shpakovski G.V."/>
            <person name="Ussery D."/>
            <person name="Barrell B.G."/>
            <person name="Nurse P."/>
        </authorList>
    </citation>
    <scope>NUCLEOTIDE SEQUENCE [LARGE SCALE GENOMIC DNA]</scope>
    <source>
        <strain>972 / ATCC 24843</strain>
    </source>
</reference>
<reference key="2">
    <citation type="journal article" date="2002" name="Curr. Biol.">
        <title>Proteomics analysis identifies new components of the fission and budding yeast anaphase-promoting complexes.</title>
        <authorList>
            <person name="Yoon H.-J."/>
            <person name="Feoktistova A."/>
            <person name="Wolfe B.A."/>
            <person name="Jennings J.L."/>
            <person name="Link A.J."/>
            <person name="Gould K.L."/>
        </authorList>
    </citation>
    <scope>SUBUNIT</scope>
</reference>
<comment type="function">
    <text>Component of the anaphase-promoting complex/cyclosome (APC/C), a cell cycle-regulated E3 ubiquitin-protein ligase complex that controls progression through mitosis and the G1 phase of the cell cycle. The APC/C is thought to confer substrate specificity and, in the presence of ubiquitin-conjugating E2 enzymes, it catalyzes the formation of protein-ubiquitin conjugates that are subsequently degraded by the 26S proteasome.</text>
</comment>
<comment type="subunit">
    <text evidence="2">The APC/C is composed of at least 13 subunits: apc1, apc2, nuc2, apc4, apc5, cut9, apc8, apc10, apc11, hcn1, apc13, apc14 and apc15.</text>
</comment>
<comment type="similarity">
    <text evidence="1">Belongs to the cullin family.</text>
</comment>
<protein>
    <recommendedName>
        <fullName>Anaphase-promoting complex subunit 2</fullName>
    </recommendedName>
    <alternativeName>
        <fullName>20S cyclosome/APC complex protein apc2</fullName>
    </alternativeName>
</protein>
<name>APC2_SCHPO</name>
<gene>
    <name type="primary">apc2</name>
    <name type="ORF">SPBP23A10.04</name>
</gene>
<dbReference type="EMBL" id="CU329671">
    <property type="protein sequence ID" value="CAD62574.1"/>
    <property type="molecule type" value="Genomic_DNA"/>
</dbReference>
<dbReference type="RefSeq" id="NP_001018806.1">
    <property type="nucleotide sequence ID" value="NM_001021720.2"/>
</dbReference>
<dbReference type="SMR" id="Q874R3"/>
<dbReference type="BioGRID" id="280280">
    <property type="interactions" value="7"/>
</dbReference>
<dbReference type="ComplexPortal" id="CPX-763">
    <property type="entry name" value="Anaphase-promoting complex"/>
</dbReference>
<dbReference type="ComplexPortal" id="CPX-764">
    <property type="entry name" value="Anaphase-promoting complex, slp1 variant"/>
</dbReference>
<dbReference type="ComplexPortal" id="CPX-765">
    <property type="entry name" value="Anaphase-promoting complex, srw1 variant"/>
</dbReference>
<dbReference type="ComplexPortal" id="CPX-766">
    <property type="entry name" value="Anaphase-promoting complex, mfr1 variant"/>
</dbReference>
<dbReference type="FunCoup" id="Q874R3">
    <property type="interactions" value="521"/>
</dbReference>
<dbReference type="IntAct" id="Q874R3">
    <property type="interactions" value="2"/>
</dbReference>
<dbReference type="STRING" id="284812.Q874R3"/>
<dbReference type="PaxDb" id="4896-SPBP23A10.04.1"/>
<dbReference type="EnsemblFungi" id="SPBP23A10.04.1">
    <property type="protein sequence ID" value="SPBP23A10.04.1:pep"/>
    <property type="gene ID" value="SPBP23A10.04"/>
</dbReference>
<dbReference type="GeneID" id="3361204"/>
<dbReference type="KEGG" id="spo:3361204"/>
<dbReference type="PomBase" id="SPBP23A10.04">
    <property type="gene designation" value="apc2"/>
</dbReference>
<dbReference type="VEuPathDB" id="FungiDB:SPBP23A10.04"/>
<dbReference type="eggNOG" id="KOG2165">
    <property type="taxonomic scope" value="Eukaryota"/>
</dbReference>
<dbReference type="HOGENOM" id="CLU_007149_4_2_1"/>
<dbReference type="InParanoid" id="Q874R3"/>
<dbReference type="OMA" id="TYFMYET"/>
<dbReference type="PhylomeDB" id="Q874R3"/>
<dbReference type="Reactome" id="R-SPO-983168">
    <property type="pathway name" value="Antigen processing: Ubiquitination &amp; Proteasome degradation"/>
</dbReference>
<dbReference type="PRO" id="PR:Q874R3"/>
<dbReference type="Proteomes" id="UP000002485">
    <property type="component" value="Chromosome II"/>
</dbReference>
<dbReference type="GO" id="GO:0005680">
    <property type="term" value="C:anaphase-promoting complex"/>
    <property type="evidence" value="ECO:0000314"/>
    <property type="project" value="PomBase"/>
</dbReference>
<dbReference type="GO" id="GO:0005829">
    <property type="term" value="C:cytosol"/>
    <property type="evidence" value="ECO:0007005"/>
    <property type="project" value="PomBase"/>
</dbReference>
<dbReference type="GO" id="GO:0005634">
    <property type="term" value="C:nucleus"/>
    <property type="evidence" value="ECO:0007005"/>
    <property type="project" value="PomBase"/>
</dbReference>
<dbReference type="GO" id="GO:0031625">
    <property type="term" value="F:ubiquitin protein ligase binding"/>
    <property type="evidence" value="ECO:0007669"/>
    <property type="project" value="InterPro"/>
</dbReference>
<dbReference type="GO" id="GO:0051301">
    <property type="term" value="P:cell division"/>
    <property type="evidence" value="ECO:0007669"/>
    <property type="project" value="UniProtKB-KW"/>
</dbReference>
<dbReference type="GO" id="GO:0007091">
    <property type="term" value="P:metaphase/anaphase transition of mitotic cell cycle"/>
    <property type="evidence" value="ECO:0000318"/>
    <property type="project" value="GO_Central"/>
</dbReference>
<dbReference type="GO" id="GO:0043161">
    <property type="term" value="P:proteasome-mediated ubiquitin-dependent protein catabolic process"/>
    <property type="evidence" value="ECO:0000305"/>
    <property type="project" value="PomBase"/>
</dbReference>
<dbReference type="GO" id="GO:0070979">
    <property type="term" value="P:protein K11-linked ubiquitination"/>
    <property type="evidence" value="ECO:0000318"/>
    <property type="project" value="GO_Central"/>
</dbReference>
<dbReference type="FunFam" id="1.10.10.10:FF:000331">
    <property type="entry name" value="Anaphase-promoting complex subunit 2"/>
    <property type="match status" value="1"/>
</dbReference>
<dbReference type="FunFam" id="1.20.1310.10:FF:000033">
    <property type="entry name" value="Anaphase-promoting complex subunit ApcB"/>
    <property type="match status" value="1"/>
</dbReference>
<dbReference type="Gene3D" id="1.20.1310.10">
    <property type="entry name" value="Cullin Repeats"/>
    <property type="match status" value="1"/>
</dbReference>
<dbReference type="Gene3D" id="3.30.230.130">
    <property type="entry name" value="Cullin, Chain C, Domain 2"/>
    <property type="match status" value="1"/>
</dbReference>
<dbReference type="Gene3D" id="1.10.10.10">
    <property type="entry name" value="Winged helix-like DNA-binding domain superfamily/Winged helix DNA-binding domain"/>
    <property type="match status" value="1"/>
</dbReference>
<dbReference type="InterPro" id="IPR044554">
    <property type="entry name" value="APC2-like"/>
</dbReference>
<dbReference type="InterPro" id="IPR014786">
    <property type="entry name" value="APC2_C"/>
</dbReference>
<dbReference type="InterPro" id="IPR016158">
    <property type="entry name" value="Cullin_homology"/>
</dbReference>
<dbReference type="InterPro" id="IPR036317">
    <property type="entry name" value="Cullin_homology_sf"/>
</dbReference>
<dbReference type="InterPro" id="IPR001373">
    <property type="entry name" value="Cullin_N"/>
</dbReference>
<dbReference type="InterPro" id="IPR036388">
    <property type="entry name" value="WH-like_DNA-bd_sf"/>
</dbReference>
<dbReference type="InterPro" id="IPR036390">
    <property type="entry name" value="WH_DNA-bd_sf"/>
</dbReference>
<dbReference type="PANTHER" id="PTHR45957">
    <property type="entry name" value="ANAPHASE-PROMOTING COMPLEX SUBUNIT 2"/>
    <property type="match status" value="1"/>
</dbReference>
<dbReference type="PANTHER" id="PTHR45957:SF1">
    <property type="entry name" value="ANAPHASE-PROMOTING COMPLEX SUBUNIT 2"/>
    <property type="match status" value="1"/>
</dbReference>
<dbReference type="Pfam" id="PF08672">
    <property type="entry name" value="ANAPC2"/>
    <property type="match status" value="1"/>
</dbReference>
<dbReference type="Pfam" id="PF00888">
    <property type="entry name" value="Cullin"/>
    <property type="match status" value="1"/>
</dbReference>
<dbReference type="SMART" id="SM01013">
    <property type="entry name" value="APC2"/>
    <property type="match status" value="1"/>
</dbReference>
<dbReference type="SMART" id="SM00182">
    <property type="entry name" value="CULLIN"/>
    <property type="match status" value="1"/>
</dbReference>
<dbReference type="SUPFAM" id="SSF75632">
    <property type="entry name" value="Cullin homology domain"/>
    <property type="match status" value="1"/>
</dbReference>
<dbReference type="SUPFAM" id="SSF46785">
    <property type="entry name" value="Winged helix' DNA-binding domain"/>
    <property type="match status" value="1"/>
</dbReference>
<dbReference type="PROSITE" id="PS50069">
    <property type="entry name" value="CULLIN_2"/>
    <property type="match status" value="1"/>
</dbReference>